<keyword id="KW-0067">ATP-binding</keyword>
<keyword id="KW-0963">Cytoplasm</keyword>
<keyword id="KW-0324">Glycolysis</keyword>
<keyword id="KW-0418">Kinase</keyword>
<keyword id="KW-0547">Nucleotide-binding</keyword>
<keyword id="KW-1185">Reference proteome</keyword>
<keyword id="KW-0808">Transferase</keyword>
<reference key="1">
    <citation type="journal article" date="2010" name="J. Bacteriol.">
        <title>The genetic basis of laboratory adaptation in Caulobacter crescentus.</title>
        <authorList>
            <person name="Marks M.E."/>
            <person name="Castro-Rojas C.M."/>
            <person name="Teiling C."/>
            <person name="Du L."/>
            <person name="Kapatral V."/>
            <person name="Walunas T.L."/>
            <person name="Crosson S."/>
        </authorList>
    </citation>
    <scope>NUCLEOTIDE SEQUENCE [LARGE SCALE GENOMIC DNA]</scope>
    <source>
        <strain>NA1000 / CB15N</strain>
    </source>
</reference>
<accession>B8H4J9</accession>
<gene>
    <name evidence="1" type="primary">pgk</name>
    <name type="ordered locus">CCNA_03359</name>
</gene>
<comment type="catalytic activity">
    <reaction evidence="1">
        <text>(2R)-3-phosphoglycerate + ATP = (2R)-3-phospho-glyceroyl phosphate + ADP</text>
        <dbReference type="Rhea" id="RHEA:14801"/>
        <dbReference type="ChEBI" id="CHEBI:30616"/>
        <dbReference type="ChEBI" id="CHEBI:57604"/>
        <dbReference type="ChEBI" id="CHEBI:58272"/>
        <dbReference type="ChEBI" id="CHEBI:456216"/>
        <dbReference type="EC" id="2.7.2.3"/>
    </reaction>
</comment>
<comment type="pathway">
    <text evidence="1">Carbohydrate degradation; glycolysis; pyruvate from D-glyceraldehyde 3-phosphate: step 2/5.</text>
</comment>
<comment type="subunit">
    <text evidence="1">Monomer.</text>
</comment>
<comment type="subcellular location">
    <subcellularLocation>
        <location evidence="1">Cytoplasm</location>
    </subcellularLocation>
</comment>
<comment type="similarity">
    <text evidence="1">Belongs to the phosphoglycerate kinase family.</text>
</comment>
<feature type="chain" id="PRO_1000192813" description="Phosphoglycerate kinase">
    <location>
        <begin position="1"/>
        <end position="396"/>
    </location>
</feature>
<feature type="binding site" evidence="1">
    <location>
        <begin position="21"/>
        <end position="23"/>
    </location>
    <ligand>
        <name>substrate</name>
    </ligand>
</feature>
<feature type="binding site" evidence="1">
    <location>
        <position position="36"/>
    </location>
    <ligand>
        <name>substrate</name>
    </ligand>
</feature>
<feature type="binding site" evidence="1">
    <location>
        <begin position="59"/>
        <end position="62"/>
    </location>
    <ligand>
        <name>substrate</name>
    </ligand>
</feature>
<feature type="binding site" evidence="1">
    <location>
        <position position="118"/>
    </location>
    <ligand>
        <name>substrate</name>
    </ligand>
</feature>
<feature type="binding site" evidence="1">
    <location>
        <position position="151"/>
    </location>
    <ligand>
        <name>substrate</name>
    </ligand>
</feature>
<feature type="binding site" evidence="1">
    <location>
        <position position="201"/>
    </location>
    <ligand>
        <name>ATP</name>
        <dbReference type="ChEBI" id="CHEBI:30616"/>
    </ligand>
</feature>
<feature type="binding site" evidence="1">
    <location>
        <position position="323"/>
    </location>
    <ligand>
        <name>ATP</name>
        <dbReference type="ChEBI" id="CHEBI:30616"/>
    </ligand>
</feature>
<feature type="binding site" evidence="1">
    <location>
        <begin position="353"/>
        <end position="356"/>
    </location>
    <ligand>
        <name>ATP</name>
        <dbReference type="ChEBI" id="CHEBI:30616"/>
    </ligand>
</feature>
<name>PGK_CAUVN</name>
<evidence type="ECO:0000255" key="1">
    <source>
        <dbReference type="HAMAP-Rule" id="MF_00145"/>
    </source>
</evidence>
<organism>
    <name type="scientific">Caulobacter vibrioides (strain NA1000 / CB15N)</name>
    <name type="common">Caulobacter crescentus</name>
    <dbReference type="NCBI Taxonomy" id="565050"/>
    <lineage>
        <taxon>Bacteria</taxon>
        <taxon>Pseudomonadati</taxon>
        <taxon>Pseudomonadota</taxon>
        <taxon>Alphaproteobacteria</taxon>
        <taxon>Caulobacterales</taxon>
        <taxon>Caulobacteraceae</taxon>
        <taxon>Caulobacter</taxon>
    </lineage>
</organism>
<sequence length="396" mass="40687">MTFRTLDTADLAGKRALVRVDFNVPVDGGKVADDTRLKAALPTIRFLADKGAKVVLLAHFDRPKGKVVPEMSLAFVAEPLAALLGAPVAFVGDCVGPAAAEVVNGLADGGVALLENVRFHAGEEKNDAEFAKALAANGDVYVNDAFSAAHRAHASTEGLAKLLPAYPGVSMQRELEALDAALGNPKKPVIGIVGGSKVSTKLDLLNNLVAKLDRLAIGGGMANTFLFAQGHDVGGSLCEKDLADTAREIMEKAKAAGCELLLPVDVVVAKKVAPGVETAVRSLSEVQADDLILDAGPESAKRLLAAMDQSLTLIWNGPLGVFEVPPFDEATVSAAKHAASLAKSGKIVAVAGGGDTVAALNHAGVSADFTFVSTAGGAFLEWMEGKTLPGVAALES</sequence>
<protein>
    <recommendedName>
        <fullName evidence="1">Phosphoglycerate kinase</fullName>
        <ecNumber evidence="1">2.7.2.3</ecNumber>
    </recommendedName>
</protein>
<dbReference type="EC" id="2.7.2.3" evidence="1"/>
<dbReference type="EMBL" id="CP001340">
    <property type="protein sequence ID" value="ACL96823.1"/>
    <property type="molecule type" value="Genomic_DNA"/>
</dbReference>
<dbReference type="RefSeq" id="WP_010921082.1">
    <property type="nucleotide sequence ID" value="NC_011916.1"/>
</dbReference>
<dbReference type="RefSeq" id="YP_002518731.1">
    <property type="nucleotide sequence ID" value="NC_011916.1"/>
</dbReference>
<dbReference type="SMR" id="B8H4J9"/>
<dbReference type="GeneID" id="7332032"/>
<dbReference type="KEGG" id="ccs:CCNA_03359"/>
<dbReference type="PATRIC" id="fig|565050.3.peg.3272"/>
<dbReference type="HOGENOM" id="CLU_025427_0_2_5"/>
<dbReference type="OrthoDB" id="9808460at2"/>
<dbReference type="PhylomeDB" id="B8H4J9"/>
<dbReference type="UniPathway" id="UPA00109">
    <property type="reaction ID" value="UER00185"/>
</dbReference>
<dbReference type="Proteomes" id="UP000001364">
    <property type="component" value="Chromosome"/>
</dbReference>
<dbReference type="GO" id="GO:0005829">
    <property type="term" value="C:cytosol"/>
    <property type="evidence" value="ECO:0007669"/>
    <property type="project" value="TreeGrafter"/>
</dbReference>
<dbReference type="GO" id="GO:0043531">
    <property type="term" value="F:ADP binding"/>
    <property type="evidence" value="ECO:0007669"/>
    <property type="project" value="TreeGrafter"/>
</dbReference>
<dbReference type="GO" id="GO:0005524">
    <property type="term" value="F:ATP binding"/>
    <property type="evidence" value="ECO:0007669"/>
    <property type="project" value="UniProtKB-KW"/>
</dbReference>
<dbReference type="GO" id="GO:0004618">
    <property type="term" value="F:phosphoglycerate kinase activity"/>
    <property type="evidence" value="ECO:0007669"/>
    <property type="project" value="UniProtKB-UniRule"/>
</dbReference>
<dbReference type="GO" id="GO:0006094">
    <property type="term" value="P:gluconeogenesis"/>
    <property type="evidence" value="ECO:0007669"/>
    <property type="project" value="TreeGrafter"/>
</dbReference>
<dbReference type="GO" id="GO:0006096">
    <property type="term" value="P:glycolytic process"/>
    <property type="evidence" value="ECO:0007669"/>
    <property type="project" value="UniProtKB-UniRule"/>
</dbReference>
<dbReference type="FunFam" id="3.40.50.1260:FF:000006">
    <property type="entry name" value="Phosphoglycerate kinase"/>
    <property type="match status" value="1"/>
</dbReference>
<dbReference type="FunFam" id="3.40.50.1260:FF:000031">
    <property type="entry name" value="Phosphoglycerate kinase 1"/>
    <property type="match status" value="1"/>
</dbReference>
<dbReference type="Gene3D" id="3.40.50.1260">
    <property type="entry name" value="Phosphoglycerate kinase, N-terminal domain"/>
    <property type="match status" value="2"/>
</dbReference>
<dbReference type="HAMAP" id="MF_00145">
    <property type="entry name" value="Phosphoglyc_kinase"/>
    <property type="match status" value="1"/>
</dbReference>
<dbReference type="InterPro" id="IPR001576">
    <property type="entry name" value="Phosphoglycerate_kinase"/>
</dbReference>
<dbReference type="InterPro" id="IPR015824">
    <property type="entry name" value="Phosphoglycerate_kinase_N"/>
</dbReference>
<dbReference type="InterPro" id="IPR036043">
    <property type="entry name" value="Phosphoglycerate_kinase_sf"/>
</dbReference>
<dbReference type="PANTHER" id="PTHR11406">
    <property type="entry name" value="PHOSPHOGLYCERATE KINASE"/>
    <property type="match status" value="1"/>
</dbReference>
<dbReference type="PANTHER" id="PTHR11406:SF23">
    <property type="entry name" value="PHOSPHOGLYCERATE KINASE 1, CHLOROPLASTIC-RELATED"/>
    <property type="match status" value="1"/>
</dbReference>
<dbReference type="Pfam" id="PF00162">
    <property type="entry name" value="PGK"/>
    <property type="match status" value="1"/>
</dbReference>
<dbReference type="PIRSF" id="PIRSF000724">
    <property type="entry name" value="Pgk"/>
    <property type="match status" value="1"/>
</dbReference>
<dbReference type="PRINTS" id="PR00477">
    <property type="entry name" value="PHGLYCKINASE"/>
</dbReference>
<dbReference type="SUPFAM" id="SSF53748">
    <property type="entry name" value="Phosphoglycerate kinase"/>
    <property type="match status" value="1"/>
</dbReference>
<proteinExistence type="inferred from homology"/>